<name>GLNE_CHRVO</name>
<organism>
    <name type="scientific">Chromobacterium violaceum (strain ATCC 12472 / DSM 30191 / JCM 1249 / CCUG 213 / NBRC 12614 / NCIMB 9131 / NCTC 9757 / MK)</name>
    <dbReference type="NCBI Taxonomy" id="243365"/>
    <lineage>
        <taxon>Bacteria</taxon>
        <taxon>Pseudomonadati</taxon>
        <taxon>Pseudomonadota</taxon>
        <taxon>Betaproteobacteria</taxon>
        <taxon>Neisseriales</taxon>
        <taxon>Chromobacteriaceae</taxon>
        <taxon>Chromobacterium</taxon>
    </lineage>
</organism>
<reference key="1">
    <citation type="journal article" date="2003" name="Proc. Natl. Acad. Sci. U.S.A.">
        <title>The complete genome sequence of Chromobacterium violaceum reveals remarkable and exploitable bacterial adaptability.</title>
        <authorList>
            <person name="Vasconcelos A.T.R."/>
            <person name="de Almeida D.F."/>
            <person name="Hungria M."/>
            <person name="Guimaraes C.T."/>
            <person name="Antonio R.V."/>
            <person name="Almeida F.C."/>
            <person name="de Almeida L.G.P."/>
            <person name="de Almeida R."/>
            <person name="Alves-Gomes J.A."/>
            <person name="Andrade E.M."/>
            <person name="Araripe J."/>
            <person name="de Araujo M.F.F."/>
            <person name="Astolfi-Filho S."/>
            <person name="Azevedo V."/>
            <person name="Baptista A.J."/>
            <person name="Bataus L.A.M."/>
            <person name="Batista J.S."/>
            <person name="Belo A."/>
            <person name="van den Berg C."/>
            <person name="Bogo M."/>
            <person name="Bonatto S."/>
            <person name="Bordignon J."/>
            <person name="Brigido M.M."/>
            <person name="Brito C.A."/>
            <person name="Brocchi M."/>
            <person name="Burity H.A."/>
            <person name="Camargo A.A."/>
            <person name="Cardoso D.D.P."/>
            <person name="Carneiro N.P."/>
            <person name="Carraro D.M."/>
            <person name="Carvalho C.M.B."/>
            <person name="Cascardo J.C.M."/>
            <person name="Cavada B.S."/>
            <person name="Chueire L.M.O."/>
            <person name="Creczynski-Pasa T.B."/>
            <person name="Cunha-Junior N.C."/>
            <person name="Fagundes N."/>
            <person name="Falcao C.L."/>
            <person name="Fantinatti F."/>
            <person name="Farias I.P."/>
            <person name="Felipe M.S.S."/>
            <person name="Ferrari L.P."/>
            <person name="Ferro J.A."/>
            <person name="Ferro M.I.T."/>
            <person name="Franco G.R."/>
            <person name="Freitas N.S.A."/>
            <person name="Furlan L.R."/>
            <person name="Gazzinelli R.T."/>
            <person name="Gomes E.A."/>
            <person name="Goncalves P.R."/>
            <person name="Grangeiro T.B."/>
            <person name="Grattapaglia D."/>
            <person name="Grisard E.C."/>
            <person name="Hanna E.S."/>
            <person name="Jardim S.N."/>
            <person name="Laurino J."/>
            <person name="Leoi L.C.T."/>
            <person name="Lima L.F.A."/>
            <person name="Loureiro M.F."/>
            <person name="Lyra M.C.C.P."/>
            <person name="Madeira H.M.F."/>
            <person name="Manfio G.P."/>
            <person name="Maranhao A.Q."/>
            <person name="Martins W.S."/>
            <person name="di Mauro S.M.Z."/>
            <person name="de Medeiros S.R.B."/>
            <person name="Meissner R.V."/>
            <person name="Moreira M.A.M."/>
            <person name="Nascimento F.F."/>
            <person name="Nicolas M.F."/>
            <person name="Oliveira J.G."/>
            <person name="Oliveira S.C."/>
            <person name="Paixao R.F.C."/>
            <person name="Parente J.A."/>
            <person name="Pedrosa F.O."/>
            <person name="Pena S.D.J."/>
            <person name="Pereira J.O."/>
            <person name="Pereira M."/>
            <person name="Pinto L.S.R.C."/>
            <person name="Pinto L.S."/>
            <person name="Porto J.I.R."/>
            <person name="Potrich D.P."/>
            <person name="Ramalho-Neto C.E."/>
            <person name="Reis A.M.M."/>
            <person name="Rigo L.U."/>
            <person name="Rondinelli E."/>
            <person name="Santos E.B.P."/>
            <person name="Santos F.R."/>
            <person name="Schneider M.P.C."/>
            <person name="Seuanez H.N."/>
            <person name="Silva A.M.R."/>
            <person name="da Silva A.L.C."/>
            <person name="Silva D.W."/>
            <person name="Silva R."/>
            <person name="Simoes I.C."/>
            <person name="Simon D."/>
            <person name="Soares C.M.A."/>
            <person name="Soares R.B.A."/>
            <person name="Souza E.M."/>
            <person name="Souza K.R.L."/>
            <person name="Souza R.C."/>
            <person name="Steffens M.B.R."/>
            <person name="Steindel M."/>
            <person name="Teixeira S.R."/>
            <person name="Urmenyi T."/>
            <person name="Vettore A."/>
            <person name="Wassem R."/>
            <person name="Zaha A."/>
            <person name="Simpson A.J.G."/>
        </authorList>
    </citation>
    <scope>NUCLEOTIDE SEQUENCE [LARGE SCALE GENOMIC DNA]</scope>
    <source>
        <strain>ATCC 12472 / DSM 30191 / JCM 1249 / CCUG 213 / NBRC 12614 / NCIMB 9131 / NCTC 9757 / MK</strain>
    </source>
</reference>
<evidence type="ECO:0000255" key="1">
    <source>
        <dbReference type="HAMAP-Rule" id="MF_00802"/>
    </source>
</evidence>
<sequence length="894" mass="99843">MPANTSAAIARSCEFSQYLHRLLTARPEERQRLEQSLHHPFSLEDMQAFADWPALDAPEALAPALRRLRQAVVARLICRDLESLATLDEVVSTISQLAEFAVRQALACAAASLPQYGRPIGEDSGEPQQLIVIGMGKLGGGELNVSSDIDLIFIYPEGGETDGARKISNHEYFTQVGKRLIALLNDATADGQVFRVDMRLRPYGDSGPLVMSFAALENYLLSQGREWERYAWIKAKAITGDADGLAQLVRPFVYRKYLDYNAYGAMRGLHAQIRREVARRDMADNIKLGPGGIREAEFIAQVFQLIRGGRDRTLQLRGTRATLERLAALRLLEPAAVAELQASYAFLRNLEHRLQYLDDQQTQTLPEAPETRQKIAASMGHADWPAFLDALNEVRRKVSRHFEQVFILPSEDSASHPLSELWLDVAEQSPETRLAELGYADPAAVARQLTGLAQSQRYLQMPLAGRKQLDALMPALIEVAARFPNADDTLSRIIGLMEAISRRASYLALLTEYPQTLQRLASLYSSSAWVSAYLSRHPILLDELLDARMLYAAPDWPLLAAQLETQLAQADGDVEAKMDALRHFQHAQTFRLVAQDLAGMWTLEALSDELSRLADLVLAAAVRHAWRDIPSRHCETPRFAVIGYGKLGGKELGYASDLDIIFLYDDEHPDAPDLYSRLARKLSTWLTSATAAGVLYDIDLRLRPNGSSGLLVSSISAFRQYQENQAWVWEHQALTRARFVAGDAGIGSQFEAERHAILTLERDPAKLRDEVMAMRQRMLDSHPAHDGDVKNARGGIIDIEFIVQYLILAHAKTLPALTGNTGNIALLAVAAEAGLIDRRLAEDARAAYRLYRRLQHSARLNDRKTVEVDESLRTAYARGRELWRQVFEQALDFS</sequence>
<comment type="function">
    <text evidence="1">Involved in the regulation of glutamine synthetase GlnA, a key enzyme in the process to assimilate ammonia. When cellular nitrogen levels are high, the C-terminal adenylyl transferase (AT) inactivates GlnA by covalent transfer of an adenylyl group from ATP to specific tyrosine residue of GlnA, thus reducing its activity. Conversely, when nitrogen levels are low, the N-terminal adenylyl removase (AR) activates GlnA by removing the adenylyl group by phosphorolysis, increasing its activity. The regulatory region of GlnE binds the signal transduction protein PII (GlnB) which indicates the nitrogen status of the cell.</text>
</comment>
<comment type="catalytic activity">
    <reaction evidence="1">
        <text>[glutamine synthetase]-O(4)-(5'-adenylyl)-L-tyrosine + phosphate = [glutamine synthetase]-L-tyrosine + ADP</text>
        <dbReference type="Rhea" id="RHEA:43716"/>
        <dbReference type="Rhea" id="RHEA-COMP:10660"/>
        <dbReference type="Rhea" id="RHEA-COMP:10661"/>
        <dbReference type="ChEBI" id="CHEBI:43474"/>
        <dbReference type="ChEBI" id="CHEBI:46858"/>
        <dbReference type="ChEBI" id="CHEBI:83624"/>
        <dbReference type="ChEBI" id="CHEBI:456216"/>
        <dbReference type="EC" id="2.7.7.89"/>
    </reaction>
</comment>
<comment type="catalytic activity">
    <reaction evidence="1">
        <text>[glutamine synthetase]-L-tyrosine + ATP = [glutamine synthetase]-O(4)-(5'-adenylyl)-L-tyrosine + diphosphate</text>
        <dbReference type="Rhea" id="RHEA:18589"/>
        <dbReference type="Rhea" id="RHEA-COMP:10660"/>
        <dbReference type="Rhea" id="RHEA-COMP:10661"/>
        <dbReference type="ChEBI" id="CHEBI:30616"/>
        <dbReference type="ChEBI" id="CHEBI:33019"/>
        <dbReference type="ChEBI" id="CHEBI:46858"/>
        <dbReference type="ChEBI" id="CHEBI:83624"/>
        <dbReference type="EC" id="2.7.7.42"/>
    </reaction>
</comment>
<comment type="cofactor">
    <cofactor evidence="1">
        <name>Mg(2+)</name>
        <dbReference type="ChEBI" id="CHEBI:18420"/>
    </cofactor>
</comment>
<comment type="similarity">
    <text evidence="1">Belongs to the GlnE family.</text>
</comment>
<gene>
    <name evidence="1" type="primary">glnE</name>
    <name type="ordered locus">CV_2095</name>
</gene>
<feature type="chain" id="PRO_0000209240" description="Bifunctional glutamine synthetase adenylyltransferase/adenylyl-removing enzyme">
    <location>
        <begin position="1"/>
        <end position="894"/>
    </location>
</feature>
<feature type="region of interest" description="Adenylyl removase" evidence="1">
    <location>
        <begin position="1"/>
        <end position="410"/>
    </location>
</feature>
<feature type="region of interest" description="Adenylyl transferase" evidence="1">
    <location>
        <begin position="415"/>
        <end position="894"/>
    </location>
</feature>
<protein>
    <recommendedName>
        <fullName evidence="1">Bifunctional glutamine synthetase adenylyltransferase/adenylyl-removing enzyme</fullName>
    </recommendedName>
    <alternativeName>
        <fullName evidence="1">ATP:glutamine synthetase adenylyltransferase</fullName>
    </alternativeName>
    <alternativeName>
        <fullName evidence="1">ATase</fullName>
    </alternativeName>
    <domain>
        <recommendedName>
            <fullName evidence="1">Glutamine synthetase adenylyl-L-tyrosine phosphorylase</fullName>
            <ecNumber evidence="1">2.7.7.89</ecNumber>
        </recommendedName>
        <alternativeName>
            <fullName evidence="1">Adenylyl removase</fullName>
            <shortName evidence="1">AR</shortName>
            <shortName evidence="1">AT-N</shortName>
        </alternativeName>
    </domain>
    <domain>
        <recommendedName>
            <fullName evidence="1">Glutamine synthetase adenylyl transferase</fullName>
            <ecNumber evidence="1">2.7.7.42</ecNumber>
        </recommendedName>
        <alternativeName>
            <fullName evidence="1">Adenylyl transferase</fullName>
            <shortName evidence="1">AT</shortName>
            <shortName evidence="1">AT-C</shortName>
        </alternativeName>
    </domain>
</protein>
<accession>Q7NW95</accession>
<proteinExistence type="inferred from homology"/>
<keyword id="KW-0067">ATP-binding</keyword>
<keyword id="KW-0460">Magnesium</keyword>
<keyword id="KW-0511">Multifunctional enzyme</keyword>
<keyword id="KW-0547">Nucleotide-binding</keyword>
<keyword id="KW-0548">Nucleotidyltransferase</keyword>
<keyword id="KW-1185">Reference proteome</keyword>
<keyword id="KW-0808">Transferase</keyword>
<dbReference type="EC" id="2.7.7.89" evidence="1"/>
<dbReference type="EC" id="2.7.7.42" evidence="1"/>
<dbReference type="EMBL" id="AE016825">
    <property type="protein sequence ID" value="AAQ59767.1"/>
    <property type="molecule type" value="Genomic_DNA"/>
</dbReference>
<dbReference type="RefSeq" id="WP_011135643.1">
    <property type="nucleotide sequence ID" value="NC_005085.1"/>
</dbReference>
<dbReference type="SMR" id="Q7NW95"/>
<dbReference type="STRING" id="243365.CV_2095"/>
<dbReference type="KEGG" id="cvi:CV_2095"/>
<dbReference type="eggNOG" id="COG1391">
    <property type="taxonomic scope" value="Bacteria"/>
</dbReference>
<dbReference type="HOGENOM" id="CLU_006233_0_1_4"/>
<dbReference type="OrthoDB" id="9759366at2"/>
<dbReference type="Proteomes" id="UP000001424">
    <property type="component" value="Chromosome"/>
</dbReference>
<dbReference type="GO" id="GO:0005829">
    <property type="term" value="C:cytosol"/>
    <property type="evidence" value="ECO:0007669"/>
    <property type="project" value="TreeGrafter"/>
</dbReference>
<dbReference type="GO" id="GO:0008882">
    <property type="term" value="F:[glutamate-ammonia-ligase] adenylyltransferase activity"/>
    <property type="evidence" value="ECO:0007669"/>
    <property type="project" value="UniProtKB-UniRule"/>
</dbReference>
<dbReference type="GO" id="GO:0047388">
    <property type="term" value="F:[glutamine synthetase]-adenylyl-L-tyrosine phosphorylase activity"/>
    <property type="evidence" value="ECO:0007669"/>
    <property type="project" value="UniProtKB-EC"/>
</dbReference>
<dbReference type="GO" id="GO:0005524">
    <property type="term" value="F:ATP binding"/>
    <property type="evidence" value="ECO:0007669"/>
    <property type="project" value="UniProtKB-UniRule"/>
</dbReference>
<dbReference type="GO" id="GO:0000287">
    <property type="term" value="F:magnesium ion binding"/>
    <property type="evidence" value="ECO:0007669"/>
    <property type="project" value="UniProtKB-UniRule"/>
</dbReference>
<dbReference type="GO" id="GO:0000820">
    <property type="term" value="P:regulation of glutamine family amino acid metabolic process"/>
    <property type="evidence" value="ECO:0007669"/>
    <property type="project" value="UniProtKB-UniRule"/>
</dbReference>
<dbReference type="CDD" id="cd05401">
    <property type="entry name" value="NT_GlnE_GlnD_like"/>
    <property type="match status" value="2"/>
</dbReference>
<dbReference type="FunFam" id="1.20.120.330:FF:000005">
    <property type="entry name" value="Bifunctional glutamine synthetase adenylyltransferase/adenylyl-removing enzyme"/>
    <property type="match status" value="1"/>
</dbReference>
<dbReference type="FunFam" id="3.30.460.10:FF:000009">
    <property type="entry name" value="Bifunctional glutamine synthetase adenylyltransferase/adenylyl-removing enzyme"/>
    <property type="match status" value="1"/>
</dbReference>
<dbReference type="Gene3D" id="1.20.120.1510">
    <property type="match status" value="1"/>
</dbReference>
<dbReference type="Gene3D" id="3.30.460.10">
    <property type="entry name" value="Beta Polymerase, domain 2"/>
    <property type="match status" value="2"/>
</dbReference>
<dbReference type="Gene3D" id="1.20.120.330">
    <property type="entry name" value="Nucleotidyltransferases domain 2"/>
    <property type="match status" value="2"/>
</dbReference>
<dbReference type="HAMAP" id="MF_00802">
    <property type="entry name" value="GlnE"/>
    <property type="match status" value="1"/>
</dbReference>
<dbReference type="InterPro" id="IPR023057">
    <property type="entry name" value="GlnE"/>
</dbReference>
<dbReference type="InterPro" id="IPR005190">
    <property type="entry name" value="GlnE_rpt_dom"/>
</dbReference>
<dbReference type="InterPro" id="IPR043519">
    <property type="entry name" value="NT_sf"/>
</dbReference>
<dbReference type="InterPro" id="IPR013546">
    <property type="entry name" value="PII_UdlTrfase/GS_AdlTrfase"/>
</dbReference>
<dbReference type="NCBIfam" id="NF008292">
    <property type="entry name" value="PRK11072.1"/>
    <property type="match status" value="1"/>
</dbReference>
<dbReference type="PANTHER" id="PTHR30621:SF0">
    <property type="entry name" value="BIFUNCTIONAL GLUTAMINE SYNTHETASE ADENYLYLTRANSFERASE_ADENYLYL-REMOVING ENZYME"/>
    <property type="match status" value="1"/>
</dbReference>
<dbReference type="PANTHER" id="PTHR30621">
    <property type="entry name" value="GLUTAMINE SYNTHETASE ADENYLYLTRANSFERASE"/>
    <property type="match status" value="1"/>
</dbReference>
<dbReference type="Pfam" id="PF08335">
    <property type="entry name" value="GlnD_UR_UTase"/>
    <property type="match status" value="2"/>
</dbReference>
<dbReference type="Pfam" id="PF03710">
    <property type="entry name" value="GlnE"/>
    <property type="match status" value="2"/>
</dbReference>
<dbReference type="SUPFAM" id="SSF81301">
    <property type="entry name" value="Nucleotidyltransferase"/>
    <property type="match status" value="2"/>
</dbReference>
<dbReference type="SUPFAM" id="SSF81593">
    <property type="entry name" value="Nucleotidyltransferase substrate binding subunit/domain"/>
    <property type="match status" value="2"/>
</dbReference>